<feature type="chain" id="PRO_0000047142" description="Transcription factor Sp3">
    <location>
        <begin position="1"/>
        <end position="783"/>
    </location>
</feature>
<feature type="zinc finger region" description="C2H2-type 1" evidence="3">
    <location>
        <begin position="623"/>
        <end position="647"/>
    </location>
</feature>
<feature type="zinc finger region" description="C2H2-type 2" evidence="3">
    <location>
        <begin position="653"/>
        <end position="677"/>
    </location>
</feature>
<feature type="zinc finger region" description="C2H2-type 3" evidence="3">
    <location>
        <begin position="683"/>
        <end position="705"/>
    </location>
</feature>
<feature type="region of interest" description="Disordered" evidence="4">
    <location>
        <begin position="1"/>
        <end position="55"/>
    </location>
</feature>
<feature type="region of interest" description="Transactivation domain (Gln-rich)" evidence="1">
    <location>
        <begin position="140"/>
        <end position="239"/>
    </location>
</feature>
<feature type="region of interest" description="Disordered" evidence="4">
    <location>
        <begin position="302"/>
        <end position="340"/>
    </location>
</feature>
<feature type="region of interest" description="Transactivation domain (Gln-rich)" evidence="1">
    <location>
        <begin position="352"/>
        <end position="501"/>
    </location>
</feature>
<feature type="region of interest" description="Repressor domain" evidence="1">
    <location>
        <begin position="536"/>
        <end position="622"/>
    </location>
</feature>
<feature type="short sequence motif" description="9aaTAD" evidence="2">
    <location>
        <begin position="463"/>
        <end position="471"/>
    </location>
</feature>
<feature type="compositionally biased region" description="Basic and acidic residues" evidence="4">
    <location>
        <begin position="1"/>
        <end position="12"/>
    </location>
</feature>
<feature type="compositionally biased region" description="Gly residues" evidence="4">
    <location>
        <begin position="19"/>
        <end position="28"/>
    </location>
</feature>
<feature type="compositionally biased region" description="Low complexity" evidence="4">
    <location>
        <begin position="29"/>
        <end position="51"/>
    </location>
</feature>
<feature type="compositionally biased region" description="Basic and acidic residues" evidence="4">
    <location>
        <begin position="310"/>
        <end position="319"/>
    </location>
</feature>
<feature type="compositionally biased region" description="Polar residues" evidence="4">
    <location>
        <begin position="322"/>
        <end position="340"/>
    </location>
</feature>
<feature type="modified residue" description="Phosphoserine" evidence="9">
    <location>
        <position position="72"/>
    </location>
</feature>
<feature type="modified residue" description="N6-acetyllysine; alternate" evidence="5">
    <location>
        <position position="553"/>
    </location>
</feature>
<feature type="modified residue" description="Phosphoserine" evidence="9">
    <location>
        <position position="565"/>
    </location>
</feature>
<feature type="modified residue" description="Phosphoserine" evidence="9">
    <location>
        <position position="568"/>
    </location>
</feature>
<feature type="modified residue" description="Phosphoserine" evidence="2">
    <location>
        <position position="648"/>
    </location>
</feature>
<feature type="cross-link" description="Glycyl lysine isopeptide (Lys-Gly) (interchain with G-Cter in SUMO)" evidence="1">
    <location>
        <position position="122"/>
    </location>
</feature>
<feature type="cross-link" description="Glycyl lysine isopeptide (Lys-Gly) (interchain with G-Cter in SUMO); alternate" evidence="1">
    <location>
        <position position="553"/>
    </location>
</feature>
<feature type="cross-link" description="Glycyl lysine isopeptide (Lys-Gly) (interchain with G-Cter in SUMO1); alternate" evidence="2">
    <location>
        <position position="553"/>
    </location>
</feature>
<feature type="cross-link" description="Glycyl lysine isopeptide (Lys-Gly) (interchain with G-Cter in SUMO2); alternate" evidence="2">
    <location>
        <position position="553"/>
    </location>
</feature>
<feature type="cross-link" description="Glycyl lysine isopeptide (Lys-Gly) (interchain with G-Cter in SUMO2)" evidence="2">
    <location>
        <position position="595"/>
    </location>
</feature>
<feature type="splice variant" id="VSP_016782" description="In isoform 3." evidence="6">
    <location>
        <begin position="1"/>
        <end position="64"/>
    </location>
</feature>
<feature type="splice variant" id="VSP_016783" description="In isoform 2." evidence="7">
    <location>
        <begin position="52"/>
        <end position="95"/>
    </location>
</feature>
<feature type="splice variant" id="VSP_016784" description="In isoform 3." evidence="6">
    <original>CSKIGPPSPGDDDEEAAVAAAAGVPAAAAG</original>
    <variation>MKEDRAAIAGRRRRGRRSCAHDEKTAADKR</variation>
    <location>
        <begin position="65"/>
        <end position="94"/>
    </location>
</feature>
<feature type="sequence conflict" description="In Ref. 3; AAH27797." evidence="8" ref="3">
    <original>PQT</original>
    <variation>TRP</variation>
    <location>
        <begin position="231"/>
        <end position="233"/>
    </location>
</feature>
<organism>
    <name type="scientific">Mus musculus</name>
    <name type="common">Mouse</name>
    <dbReference type="NCBI Taxonomy" id="10090"/>
    <lineage>
        <taxon>Eukaryota</taxon>
        <taxon>Metazoa</taxon>
        <taxon>Chordata</taxon>
        <taxon>Craniata</taxon>
        <taxon>Vertebrata</taxon>
        <taxon>Euteleostomi</taxon>
        <taxon>Mammalia</taxon>
        <taxon>Eutheria</taxon>
        <taxon>Euarchontoglires</taxon>
        <taxon>Glires</taxon>
        <taxon>Rodentia</taxon>
        <taxon>Myomorpha</taxon>
        <taxon>Muroidea</taxon>
        <taxon>Muridae</taxon>
        <taxon>Murinae</taxon>
        <taxon>Mus</taxon>
        <taxon>Mus</taxon>
    </lineage>
</organism>
<gene>
    <name type="primary">Sp3</name>
</gene>
<proteinExistence type="evidence at protein level"/>
<protein>
    <recommendedName>
        <fullName>Transcription factor Sp3</fullName>
    </recommendedName>
</protein>
<sequence length="783" mass="82362">MTAPEKPVKQEEMAALDVDGGGGGGGHGEYLQQQQQQQQQHGNGAAAAAAQDTQPSPLALLAATCSKIGPPSPGDDDEEAAVAAAAGVPAAAAGATGDLASAQLGGAPNRWEVLSATPTTIKDEAGNLVQIPGAATSSGQYVLPLQNLQNQQIFSVAPGSDSSNGTVSNVQYQVIPQIQSTDAQQVQIGFTGSSDNGGINQENSQIQIIPGSNQTLLASGTPPANIQNLIPQTGQVQVQGVAIGGSSFPGQTQVVANVPLGLPGNITFVPINSVDLDSLGLSGSSQTMTAGINADGHLINTGQAMDSSDNSERTGERVSPDVNETNADTDLFVPTSSSSQLPVTIDSTGILQQNTNSLTTTSGQVHSSDLQGNYIQSPVSEETQAQNIQVSTAQPVVQHLQLQDSQQPTSQAQIVQGITPQTIHGVQASGQNISQQALQNLQLQLNPGTFLIQAQTVTPSGQITWQTFQVQGVQNLQNLQIQNTAAQQITLTPVQTLTLGQVAAGGALTSTPVSLSTGQLPNLQTVTVNSIDSTGIQLHPGENADSPADIRIKEEEPDPEEWQLSGDSTLNTNDLTHLRVQVVDEEGDQQHQEGKRLRRVACTCPNCKEGGGRGTNLGKKKQHICHIPGCGKVYGKTSHLRAHLRWHSGERPFICNWMFCGKRFTRSDELQRHRRTHTGEKKFVCPECSKRFMRSDHLAKHIKTHQNKKVIHSSSTVLASVEAGRDDALITAGGTTLILANIQQGSVSGIGTVNTSATSNQDILTNTEIPLQLVTVSGNETME</sequence>
<reference key="1">
    <citation type="journal article" date="2005" name="Science">
        <title>The transcriptional landscape of the mammalian genome.</title>
        <authorList>
            <person name="Carninci P."/>
            <person name="Kasukawa T."/>
            <person name="Katayama S."/>
            <person name="Gough J."/>
            <person name="Frith M.C."/>
            <person name="Maeda N."/>
            <person name="Oyama R."/>
            <person name="Ravasi T."/>
            <person name="Lenhard B."/>
            <person name="Wells C."/>
            <person name="Kodzius R."/>
            <person name="Shimokawa K."/>
            <person name="Bajic V.B."/>
            <person name="Brenner S.E."/>
            <person name="Batalov S."/>
            <person name="Forrest A.R."/>
            <person name="Zavolan M."/>
            <person name="Davis M.J."/>
            <person name="Wilming L.G."/>
            <person name="Aidinis V."/>
            <person name="Allen J.E."/>
            <person name="Ambesi-Impiombato A."/>
            <person name="Apweiler R."/>
            <person name="Aturaliya R.N."/>
            <person name="Bailey T.L."/>
            <person name="Bansal M."/>
            <person name="Baxter L."/>
            <person name="Beisel K.W."/>
            <person name="Bersano T."/>
            <person name="Bono H."/>
            <person name="Chalk A.M."/>
            <person name="Chiu K.P."/>
            <person name="Choudhary V."/>
            <person name="Christoffels A."/>
            <person name="Clutterbuck D.R."/>
            <person name="Crowe M.L."/>
            <person name="Dalla E."/>
            <person name="Dalrymple B.P."/>
            <person name="de Bono B."/>
            <person name="Della Gatta G."/>
            <person name="di Bernardo D."/>
            <person name="Down T."/>
            <person name="Engstrom P."/>
            <person name="Fagiolini M."/>
            <person name="Faulkner G."/>
            <person name="Fletcher C.F."/>
            <person name="Fukushima T."/>
            <person name="Furuno M."/>
            <person name="Futaki S."/>
            <person name="Gariboldi M."/>
            <person name="Georgii-Hemming P."/>
            <person name="Gingeras T.R."/>
            <person name="Gojobori T."/>
            <person name="Green R.E."/>
            <person name="Gustincich S."/>
            <person name="Harbers M."/>
            <person name="Hayashi Y."/>
            <person name="Hensch T.K."/>
            <person name="Hirokawa N."/>
            <person name="Hill D."/>
            <person name="Huminiecki L."/>
            <person name="Iacono M."/>
            <person name="Ikeo K."/>
            <person name="Iwama A."/>
            <person name="Ishikawa T."/>
            <person name="Jakt M."/>
            <person name="Kanapin A."/>
            <person name="Katoh M."/>
            <person name="Kawasawa Y."/>
            <person name="Kelso J."/>
            <person name="Kitamura H."/>
            <person name="Kitano H."/>
            <person name="Kollias G."/>
            <person name="Krishnan S.P."/>
            <person name="Kruger A."/>
            <person name="Kummerfeld S.K."/>
            <person name="Kurochkin I.V."/>
            <person name="Lareau L.F."/>
            <person name="Lazarevic D."/>
            <person name="Lipovich L."/>
            <person name="Liu J."/>
            <person name="Liuni S."/>
            <person name="McWilliam S."/>
            <person name="Madan Babu M."/>
            <person name="Madera M."/>
            <person name="Marchionni L."/>
            <person name="Matsuda H."/>
            <person name="Matsuzawa S."/>
            <person name="Miki H."/>
            <person name="Mignone F."/>
            <person name="Miyake S."/>
            <person name="Morris K."/>
            <person name="Mottagui-Tabar S."/>
            <person name="Mulder N."/>
            <person name="Nakano N."/>
            <person name="Nakauchi H."/>
            <person name="Ng P."/>
            <person name="Nilsson R."/>
            <person name="Nishiguchi S."/>
            <person name="Nishikawa S."/>
            <person name="Nori F."/>
            <person name="Ohara O."/>
            <person name="Okazaki Y."/>
            <person name="Orlando V."/>
            <person name="Pang K.C."/>
            <person name="Pavan W.J."/>
            <person name="Pavesi G."/>
            <person name="Pesole G."/>
            <person name="Petrovsky N."/>
            <person name="Piazza S."/>
            <person name="Reed J."/>
            <person name="Reid J.F."/>
            <person name="Ring B.Z."/>
            <person name="Ringwald M."/>
            <person name="Rost B."/>
            <person name="Ruan Y."/>
            <person name="Salzberg S.L."/>
            <person name="Sandelin A."/>
            <person name="Schneider C."/>
            <person name="Schoenbach C."/>
            <person name="Sekiguchi K."/>
            <person name="Semple C.A."/>
            <person name="Seno S."/>
            <person name="Sessa L."/>
            <person name="Sheng Y."/>
            <person name="Shibata Y."/>
            <person name="Shimada H."/>
            <person name="Shimada K."/>
            <person name="Silva D."/>
            <person name="Sinclair B."/>
            <person name="Sperling S."/>
            <person name="Stupka E."/>
            <person name="Sugiura K."/>
            <person name="Sultana R."/>
            <person name="Takenaka Y."/>
            <person name="Taki K."/>
            <person name="Tammoja K."/>
            <person name="Tan S.L."/>
            <person name="Tang S."/>
            <person name="Taylor M.S."/>
            <person name="Tegner J."/>
            <person name="Teichmann S.A."/>
            <person name="Ueda H.R."/>
            <person name="van Nimwegen E."/>
            <person name="Verardo R."/>
            <person name="Wei C.L."/>
            <person name="Yagi K."/>
            <person name="Yamanishi H."/>
            <person name="Zabarovsky E."/>
            <person name="Zhu S."/>
            <person name="Zimmer A."/>
            <person name="Hide W."/>
            <person name="Bult C."/>
            <person name="Grimmond S.M."/>
            <person name="Teasdale R.D."/>
            <person name="Liu E.T."/>
            <person name="Brusic V."/>
            <person name="Quackenbush J."/>
            <person name="Wahlestedt C."/>
            <person name="Mattick J.S."/>
            <person name="Hume D.A."/>
            <person name="Kai C."/>
            <person name="Sasaki D."/>
            <person name="Tomaru Y."/>
            <person name="Fukuda S."/>
            <person name="Kanamori-Katayama M."/>
            <person name="Suzuki M."/>
            <person name="Aoki J."/>
            <person name="Arakawa T."/>
            <person name="Iida J."/>
            <person name="Imamura K."/>
            <person name="Itoh M."/>
            <person name="Kato T."/>
            <person name="Kawaji H."/>
            <person name="Kawagashira N."/>
            <person name="Kawashima T."/>
            <person name="Kojima M."/>
            <person name="Kondo S."/>
            <person name="Konno H."/>
            <person name="Nakano K."/>
            <person name="Ninomiya N."/>
            <person name="Nishio T."/>
            <person name="Okada M."/>
            <person name="Plessy C."/>
            <person name="Shibata K."/>
            <person name="Shiraki T."/>
            <person name="Suzuki S."/>
            <person name="Tagami M."/>
            <person name="Waki K."/>
            <person name="Watahiki A."/>
            <person name="Okamura-Oho Y."/>
            <person name="Suzuki H."/>
            <person name="Kawai J."/>
            <person name="Hayashizaki Y."/>
        </authorList>
    </citation>
    <scope>NUCLEOTIDE SEQUENCE [LARGE SCALE MRNA] (ISOFORMS 1 AND 3)</scope>
    <source>
        <strain>C57BL/6J</strain>
        <tissue>Lung</tissue>
        <tissue>Testis</tissue>
    </source>
</reference>
<reference key="2">
    <citation type="journal article" date="2009" name="PLoS Biol.">
        <title>Lineage-specific biology revealed by a finished genome assembly of the mouse.</title>
        <authorList>
            <person name="Church D.M."/>
            <person name="Goodstadt L."/>
            <person name="Hillier L.W."/>
            <person name="Zody M.C."/>
            <person name="Goldstein S."/>
            <person name="She X."/>
            <person name="Bult C.J."/>
            <person name="Agarwala R."/>
            <person name="Cherry J.L."/>
            <person name="DiCuccio M."/>
            <person name="Hlavina W."/>
            <person name="Kapustin Y."/>
            <person name="Meric P."/>
            <person name="Maglott D."/>
            <person name="Birtle Z."/>
            <person name="Marques A.C."/>
            <person name="Graves T."/>
            <person name="Zhou S."/>
            <person name="Teague B."/>
            <person name="Potamousis K."/>
            <person name="Churas C."/>
            <person name="Place M."/>
            <person name="Herschleb J."/>
            <person name="Runnheim R."/>
            <person name="Forrest D."/>
            <person name="Amos-Landgraf J."/>
            <person name="Schwartz D.C."/>
            <person name="Cheng Z."/>
            <person name="Lindblad-Toh K."/>
            <person name="Eichler E.E."/>
            <person name="Ponting C.P."/>
        </authorList>
    </citation>
    <scope>NUCLEOTIDE SEQUENCE [LARGE SCALE GENOMIC DNA]</scope>
    <source>
        <strain>C57BL/6J</strain>
    </source>
</reference>
<reference key="3">
    <citation type="journal article" date="2004" name="Genome Res.">
        <title>The status, quality, and expansion of the NIH full-length cDNA project: the Mammalian Gene Collection (MGC).</title>
        <authorList>
            <consortium name="The MGC Project Team"/>
        </authorList>
    </citation>
    <scope>NUCLEOTIDE SEQUENCE [LARGE SCALE MRNA] (ISOFORM 1)</scope>
    <source>
        <strain>C57BL/6J</strain>
        <strain>FVB/N</strain>
        <tissue>Brain</tissue>
        <tissue>Mammary tumor</tissue>
    </source>
</reference>
<reference key="4">
    <citation type="journal article" date="1998" name="DNA Cell Biol.">
        <title>Sp family transcription factors regulate expression of rat D2 dopamine receptor gene.</title>
        <authorList>
            <person name="Yajima S."/>
            <person name="Lee S.H."/>
            <person name="Minowa T."/>
            <person name="Mouradian M.M."/>
        </authorList>
    </citation>
    <scope>NUCLEOTIDE SEQUENCE [MRNA] OF 15-783 (ISOFORM 2)</scope>
    <source>
        <tissue>Neuroblastoma</tissue>
    </source>
</reference>
<reference key="5">
    <citation type="journal article" date="2005" name="Biochem. J.">
        <title>Sp3 is involved in the regulation of SOCS3 gene expression.</title>
        <authorList>
            <person name="Ehlting C."/>
            <person name="Haussinger D."/>
            <person name="Bode J.G."/>
        </authorList>
    </citation>
    <scope>ACETYLATION AT LYS-553</scope>
    <scope>FUNCTION</scope>
</reference>
<reference key="6">
    <citation type="journal article" date="2010" name="Cell">
        <title>A tissue-specific atlas of mouse protein phosphorylation and expression.</title>
        <authorList>
            <person name="Huttlin E.L."/>
            <person name="Jedrychowski M.P."/>
            <person name="Elias J.E."/>
            <person name="Goswami T."/>
            <person name="Rad R."/>
            <person name="Beausoleil S.A."/>
            <person name="Villen J."/>
            <person name="Haas W."/>
            <person name="Sowa M.E."/>
            <person name="Gygi S.P."/>
        </authorList>
    </citation>
    <scope>PHOSPHORYLATION [LARGE SCALE ANALYSIS] AT SER-72; SER-565 AND SER-568</scope>
    <scope>IDENTIFICATION BY MASS SPECTROMETRY [LARGE SCALE ANALYSIS]</scope>
    <source>
        <tissue>Brain</tissue>
        <tissue>Kidney</tissue>
        <tissue>Lung</tissue>
        <tissue>Spleen</tissue>
    </source>
</reference>
<comment type="function">
    <text evidence="1 5">Transcriptional factor that can act as an activator or repressor depending on isoform and/or post-translational modifications. Binds to GT and GC boxes promoter elements. Competes with SP1 for the GC-box promoters. Weak activator of transcription but can activate a number of genes involved in different processes such as cell-cycle regulation, hormone-induction and house-keeping (By similarity).</text>
</comment>
<comment type="subunit">
    <text evidence="1">Interacts with HLTF; the interaction may be required for basal transcriptional activity of HLTF. Interacts with HDAC1; the interaction deacetylates SP3 and regulates its transcriptional activity. Interacts with HDAC2 (preferably the CK2-phosphorylated form); the interaction deacetylates SP3 and regulates its transcriptional activity. Ceramides can also regulate acetylation/deacetylation events through altering the interaction of HDAC with SP3. Interacts with MEIS2 isoform Meis2D and PBX1 isoform PBX1a (By similarity).</text>
</comment>
<comment type="interaction">
    <interactant intactId="EBI-643514">
        <id>O70494</id>
    </interactant>
    <interactant intactId="EBI-1188816">
        <id>Q9Z2D6</id>
        <label>Mecp2</label>
    </interactant>
    <organismsDiffer>false</organismsDiffer>
    <experiments>2</experiments>
</comment>
<comment type="subcellular location">
    <subcellularLocation>
        <location>Nucleus</location>
    </subcellularLocation>
    <subcellularLocation>
        <location evidence="1">Nucleus</location>
        <location evidence="1">PML body</location>
    </subcellularLocation>
    <text evidence="1">Localizes to the nuclear periphery and in nuclear dots when sumoylated. Some localization in PML nuclear bodies (By similarity).</text>
</comment>
<comment type="alternative products">
    <event type="alternative splicing"/>
    <isoform>
        <id>O70494-1</id>
        <name>1</name>
        <sequence type="displayed"/>
    </isoform>
    <isoform>
        <id>O70494-2</id>
        <name>2</name>
        <sequence type="described" ref="VSP_016783"/>
    </isoform>
    <isoform>
        <id>O70494-3</id>
        <name>3</name>
        <sequence type="described" ref="VSP_016782 VSP_016784"/>
    </isoform>
</comment>
<comment type="domain">
    <text evidence="2">The 9aaTAD motif is a transactivation domain present in a large number of yeast and animal transcription factors.</text>
</comment>
<comment type="PTM">
    <text evidence="1">Acetylated by histone acetyltransferase p300, deacetylated by HDACs. Acetylation/deacetylation states regulate transcriptional activity. Acetylation appears to activate transcription. Alternate sumoylation and acetylation at Lys-553 also control transcriptional activity (By similarity).</text>
</comment>
<comment type="PTM">
    <text evidence="1">Sumoylated on all isoforms. Sumoylated on 2 sites in longer isoforms with Lys-553 being the major site. Sumoylation at this site promotes nuclear localization to the nuclear periphery, nuclear dots and PML nuclear bodies. Sumoylation on Lys-553 represses the transactivation activity, except for the largest isoform which has little effect on transactivation. Alternate sumoylation and acetylation at Lys-553 also control transcriptional activity (By similarity).</text>
</comment>
<comment type="similarity">
    <text evidence="8">Belongs to the Sp1 C2H2-type zinc-finger protein family.</text>
</comment>
<comment type="sequence caution" evidence="8">
    <conflict type="erroneous initiation">
        <sequence resource="EMBL-CDS" id="AAH27797"/>
    </conflict>
</comment>
<comment type="sequence caution" evidence="8">
    <conflict type="erroneous initiation">
        <sequence resource="EMBL-CDS" id="BAE21310"/>
    </conflict>
</comment>
<evidence type="ECO:0000250" key="1"/>
<evidence type="ECO:0000250" key="2">
    <source>
        <dbReference type="UniProtKB" id="Q02447"/>
    </source>
</evidence>
<evidence type="ECO:0000255" key="3">
    <source>
        <dbReference type="PROSITE-ProRule" id="PRU00042"/>
    </source>
</evidence>
<evidence type="ECO:0000256" key="4">
    <source>
        <dbReference type="SAM" id="MobiDB-lite"/>
    </source>
</evidence>
<evidence type="ECO:0000269" key="5">
    <source>
    </source>
</evidence>
<evidence type="ECO:0000303" key="6">
    <source>
    </source>
</evidence>
<evidence type="ECO:0000303" key="7">
    <source>
    </source>
</evidence>
<evidence type="ECO:0000305" key="8"/>
<evidence type="ECO:0007744" key="9">
    <source>
    </source>
</evidence>
<name>SP3_MOUSE</name>
<accession>O70494</accession>
<accession>A2AQK9</accession>
<accession>Q68FF2</accession>
<accession>Q8CF64</accession>
<accession>Q8K378</accession>
<dbReference type="EMBL" id="AK004607">
    <property type="protein sequence ID" value="BAC25090.1"/>
    <property type="molecule type" value="mRNA"/>
</dbReference>
<dbReference type="EMBL" id="AK132702">
    <property type="protein sequence ID" value="BAE21310.1"/>
    <property type="status" value="ALT_INIT"/>
    <property type="molecule type" value="mRNA"/>
</dbReference>
<dbReference type="EMBL" id="AL844840">
    <property type="status" value="NOT_ANNOTATED_CDS"/>
    <property type="molecule type" value="Genomic_DNA"/>
</dbReference>
<dbReference type="EMBL" id="BC027797">
    <property type="protein sequence ID" value="AAH27797.2"/>
    <property type="status" value="ALT_INIT"/>
    <property type="molecule type" value="mRNA"/>
</dbReference>
<dbReference type="EMBL" id="BC079874">
    <property type="protein sequence ID" value="AAH79874.1"/>
    <property type="molecule type" value="mRNA"/>
</dbReference>
<dbReference type="EMBL" id="AF062567">
    <property type="protein sequence ID" value="AAC16322.1"/>
    <property type="molecule type" value="mRNA"/>
</dbReference>
<dbReference type="CCDS" id="CCDS16122.1">
    <molecule id="O70494-1"/>
</dbReference>
<dbReference type="RefSeq" id="NP_001018052.1">
    <molecule id="O70494-1"/>
    <property type="nucleotide sequence ID" value="NM_001018042.3"/>
</dbReference>
<dbReference type="RefSeq" id="NP_001091895.1">
    <property type="nucleotide sequence ID" value="NM_001098425.1"/>
</dbReference>
<dbReference type="SMR" id="O70494"/>
<dbReference type="BioGRID" id="203418">
    <property type="interactions" value="9"/>
</dbReference>
<dbReference type="FunCoup" id="O70494">
    <property type="interactions" value="4458"/>
</dbReference>
<dbReference type="IntAct" id="O70494">
    <property type="interactions" value="2"/>
</dbReference>
<dbReference type="MINT" id="O70494"/>
<dbReference type="STRING" id="10090.ENSMUSP00000099750"/>
<dbReference type="GlyGen" id="O70494">
    <property type="glycosylation" value="2 sites, 1 O-linked glycan (1 site)"/>
</dbReference>
<dbReference type="iPTMnet" id="O70494"/>
<dbReference type="PhosphoSitePlus" id="O70494"/>
<dbReference type="PaxDb" id="10090-ENSMUSP00000099750"/>
<dbReference type="PeptideAtlas" id="O70494"/>
<dbReference type="ProteomicsDB" id="263297">
    <molecule id="O70494-1"/>
</dbReference>
<dbReference type="ProteomicsDB" id="263298">
    <molecule id="O70494-2"/>
</dbReference>
<dbReference type="ProteomicsDB" id="263299">
    <molecule id="O70494-3"/>
</dbReference>
<dbReference type="Pumba" id="O70494"/>
<dbReference type="Antibodypedia" id="3887">
    <property type="antibodies" value="408 antibodies from 33 providers"/>
</dbReference>
<dbReference type="DNASU" id="20687"/>
<dbReference type="Ensembl" id="ENSMUST00000066003.7">
    <molecule id="O70494-2"/>
    <property type="protein sequence ID" value="ENSMUSP00000065807.7"/>
    <property type="gene ID" value="ENSMUSG00000027109.17"/>
</dbReference>
<dbReference type="Ensembl" id="ENSMUST00000102689.10">
    <molecule id="O70494-1"/>
    <property type="protein sequence ID" value="ENSMUSP00000099750.4"/>
    <property type="gene ID" value="ENSMUSG00000027109.17"/>
</dbReference>
<dbReference type="GeneID" id="20687"/>
<dbReference type="KEGG" id="mmu:20687"/>
<dbReference type="UCSC" id="uc008kca.2">
    <molecule id="O70494-1"/>
    <property type="organism name" value="mouse"/>
</dbReference>
<dbReference type="UCSC" id="uc008kcb.2">
    <molecule id="O70494-2"/>
    <property type="organism name" value="mouse"/>
</dbReference>
<dbReference type="AGR" id="MGI:1277166"/>
<dbReference type="CTD" id="6670"/>
<dbReference type="MGI" id="MGI:1277166">
    <property type="gene designation" value="Sp3"/>
</dbReference>
<dbReference type="VEuPathDB" id="HostDB:ENSMUSG00000027109"/>
<dbReference type="eggNOG" id="KOG1721">
    <property type="taxonomic scope" value="Eukaryota"/>
</dbReference>
<dbReference type="GeneTree" id="ENSGT00940000155099"/>
<dbReference type="HOGENOM" id="CLU_019688_2_1_1"/>
<dbReference type="InParanoid" id="O70494"/>
<dbReference type="OMA" id="TCTQVES"/>
<dbReference type="OrthoDB" id="6365676at2759"/>
<dbReference type="PhylomeDB" id="O70494"/>
<dbReference type="TreeFam" id="TF350150"/>
<dbReference type="Reactome" id="R-MMU-3232118">
    <property type="pathway name" value="SUMOylation of transcription factors"/>
</dbReference>
<dbReference type="BioGRID-ORCS" id="20687">
    <property type="hits" value="14 hits in 80 CRISPR screens"/>
</dbReference>
<dbReference type="ChiTaRS" id="Sp3">
    <property type="organism name" value="mouse"/>
</dbReference>
<dbReference type="PRO" id="PR:O70494"/>
<dbReference type="Proteomes" id="UP000000589">
    <property type="component" value="Chromosome 2"/>
</dbReference>
<dbReference type="RNAct" id="O70494">
    <property type="molecule type" value="protein"/>
</dbReference>
<dbReference type="Bgee" id="ENSMUSG00000027109">
    <property type="expression patterns" value="Expressed in indifferent gonad and 256 other cell types or tissues"/>
</dbReference>
<dbReference type="GO" id="GO:0005829">
    <property type="term" value="C:cytosol"/>
    <property type="evidence" value="ECO:0007669"/>
    <property type="project" value="Ensembl"/>
</dbReference>
<dbReference type="GO" id="GO:0005634">
    <property type="term" value="C:nucleus"/>
    <property type="evidence" value="ECO:0000314"/>
    <property type="project" value="MGI"/>
</dbReference>
<dbReference type="GO" id="GO:0016605">
    <property type="term" value="C:PML body"/>
    <property type="evidence" value="ECO:0007669"/>
    <property type="project" value="UniProtKB-SubCell"/>
</dbReference>
<dbReference type="GO" id="GO:0017053">
    <property type="term" value="C:transcription repressor complex"/>
    <property type="evidence" value="ECO:0000314"/>
    <property type="project" value="UniProtKB"/>
</dbReference>
<dbReference type="GO" id="GO:0003682">
    <property type="term" value="F:chromatin binding"/>
    <property type="evidence" value="ECO:0000314"/>
    <property type="project" value="MGI"/>
</dbReference>
<dbReference type="GO" id="GO:0000987">
    <property type="term" value="F:cis-regulatory region sequence-specific DNA binding"/>
    <property type="evidence" value="ECO:0000314"/>
    <property type="project" value="MGI"/>
</dbReference>
<dbReference type="GO" id="GO:0003677">
    <property type="term" value="F:DNA binding"/>
    <property type="evidence" value="ECO:0000314"/>
    <property type="project" value="MGI"/>
</dbReference>
<dbReference type="GO" id="GO:0003700">
    <property type="term" value="F:DNA-binding transcription factor activity"/>
    <property type="evidence" value="ECO:0000304"/>
    <property type="project" value="MGI"/>
</dbReference>
<dbReference type="GO" id="GO:0001227">
    <property type="term" value="F:DNA-binding transcription repressor activity, RNA polymerase II-specific"/>
    <property type="evidence" value="ECO:0000314"/>
    <property type="project" value="UniProtKB"/>
</dbReference>
<dbReference type="GO" id="GO:0003690">
    <property type="term" value="F:double-stranded DNA binding"/>
    <property type="evidence" value="ECO:0000314"/>
    <property type="project" value="MGI"/>
</dbReference>
<dbReference type="GO" id="GO:0000978">
    <property type="term" value="F:RNA polymerase II cis-regulatory region sequence-specific DNA binding"/>
    <property type="evidence" value="ECO:0000314"/>
    <property type="project" value="MGI"/>
</dbReference>
<dbReference type="GO" id="GO:0061629">
    <property type="term" value="F:RNA polymerase II-specific DNA-binding transcription factor binding"/>
    <property type="evidence" value="ECO:0000353"/>
    <property type="project" value="UniProtKB"/>
</dbReference>
<dbReference type="GO" id="GO:0008270">
    <property type="term" value="F:zinc ion binding"/>
    <property type="evidence" value="ECO:0007669"/>
    <property type="project" value="UniProtKB-KW"/>
</dbReference>
<dbReference type="GO" id="GO:0030183">
    <property type="term" value="P:B cell differentiation"/>
    <property type="evidence" value="ECO:0000315"/>
    <property type="project" value="MGI"/>
</dbReference>
<dbReference type="GO" id="GO:0060216">
    <property type="term" value="P:definitive hemopoiesis"/>
    <property type="evidence" value="ECO:0000316"/>
    <property type="project" value="MGI"/>
</dbReference>
<dbReference type="GO" id="GO:0048596">
    <property type="term" value="P:embryonic camera-type eye morphogenesis"/>
    <property type="evidence" value="ECO:0000316"/>
    <property type="project" value="MGI"/>
</dbReference>
<dbReference type="GO" id="GO:0001892">
    <property type="term" value="P:embryonic placenta development"/>
    <property type="evidence" value="ECO:0000316"/>
    <property type="project" value="MGI"/>
</dbReference>
<dbReference type="GO" id="GO:0060136">
    <property type="term" value="P:embryonic process involved in female pregnancy"/>
    <property type="evidence" value="ECO:0000316"/>
    <property type="project" value="MGI"/>
</dbReference>
<dbReference type="GO" id="GO:0048706">
    <property type="term" value="P:embryonic skeletal system development"/>
    <property type="evidence" value="ECO:0000316"/>
    <property type="project" value="MGI"/>
</dbReference>
<dbReference type="GO" id="GO:0043353">
    <property type="term" value="P:enucleate erythrocyte differentiation"/>
    <property type="evidence" value="ECO:0000316"/>
    <property type="project" value="MGI"/>
</dbReference>
<dbReference type="GO" id="GO:0030218">
    <property type="term" value="P:erythrocyte differentiation"/>
    <property type="evidence" value="ECO:0000315"/>
    <property type="project" value="MGI"/>
</dbReference>
<dbReference type="GO" id="GO:0030851">
    <property type="term" value="P:granulocyte differentiation"/>
    <property type="evidence" value="ECO:0000315"/>
    <property type="project" value="MGI"/>
</dbReference>
<dbReference type="GO" id="GO:0001701">
    <property type="term" value="P:in utero embryonic development"/>
    <property type="evidence" value="ECO:0000316"/>
    <property type="project" value="MGI"/>
</dbReference>
<dbReference type="GO" id="GO:0001889">
    <property type="term" value="P:liver development"/>
    <property type="evidence" value="ECO:0000316"/>
    <property type="project" value="MGI"/>
</dbReference>
<dbReference type="GO" id="GO:0030324">
    <property type="term" value="P:lung development"/>
    <property type="evidence" value="ECO:0000316"/>
    <property type="project" value="MGI"/>
</dbReference>
<dbReference type="GO" id="GO:0030219">
    <property type="term" value="P:megakaryocyte differentiation"/>
    <property type="evidence" value="ECO:0000316"/>
    <property type="project" value="MGI"/>
</dbReference>
<dbReference type="GO" id="GO:0030224">
    <property type="term" value="P:monocyte differentiation"/>
    <property type="evidence" value="ECO:0000315"/>
    <property type="project" value="MGI"/>
</dbReference>
<dbReference type="GO" id="GO:0002318">
    <property type="term" value="P:myeloid progenitor cell differentiation"/>
    <property type="evidence" value="ECO:0000316"/>
    <property type="project" value="MGI"/>
</dbReference>
<dbReference type="GO" id="GO:0001779">
    <property type="term" value="P:natural killer cell differentiation"/>
    <property type="evidence" value="ECO:0000315"/>
    <property type="project" value="MGI"/>
</dbReference>
<dbReference type="GO" id="GO:0045892">
    <property type="term" value="P:negative regulation of DNA-templated transcription"/>
    <property type="evidence" value="ECO:0000314"/>
    <property type="project" value="UniProtKB"/>
</dbReference>
<dbReference type="GO" id="GO:0001503">
    <property type="term" value="P:ossification"/>
    <property type="evidence" value="ECO:0000316"/>
    <property type="project" value="MGI"/>
</dbReference>
<dbReference type="GO" id="GO:0045944">
    <property type="term" value="P:positive regulation of transcription by RNA polymerase II"/>
    <property type="evidence" value="ECO:0007669"/>
    <property type="project" value="Ensembl"/>
</dbReference>
<dbReference type="GO" id="GO:0006355">
    <property type="term" value="P:regulation of DNA-templated transcription"/>
    <property type="evidence" value="ECO:0000304"/>
    <property type="project" value="MGI"/>
</dbReference>
<dbReference type="GO" id="GO:0030217">
    <property type="term" value="P:T cell differentiation"/>
    <property type="evidence" value="ECO:0000315"/>
    <property type="project" value="MGI"/>
</dbReference>
<dbReference type="GO" id="GO:0001829">
    <property type="term" value="P:trophectodermal cell differentiation"/>
    <property type="evidence" value="ECO:0000316"/>
    <property type="project" value="MGI"/>
</dbReference>
<dbReference type="CDD" id="cd22537">
    <property type="entry name" value="SP3_N"/>
    <property type="match status" value="1"/>
</dbReference>
<dbReference type="FunFam" id="3.30.160.60:FF:000014">
    <property type="entry name" value="Transcription factor Sp3"/>
    <property type="match status" value="1"/>
</dbReference>
<dbReference type="FunFam" id="3.30.160.60:FF:000026">
    <property type="entry name" value="Transcription factor Sp3"/>
    <property type="match status" value="1"/>
</dbReference>
<dbReference type="FunFam" id="3.30.160.60:FF:000061">
    <property type="entry name" value="Transcription factor Sp3"/>
    <property type="match status" value="1"/>
</dbReference>
<dbReference type="Gene3D" id="3.30.160.60">
    <property type="entry name" value="Classic Zinc Finger"/>
    <property type="match status" value="3"/>
</dbReference>
<dbReference type="InterPro" id="IPR036236">
    <property type="entry name" value="Znf_C2H2_sf"/>
</dbReference>
<dbReference type="InterPro" id="IPR013087">
    <property type="entry name" value="Znf_C2H2_type"/>
</dbReference>
<dbReference type="PANTHER" id="PTHR23235">
    <property type="entry name" value="KRUEPPEL-LIKE TRANSCRIPTION FACTOR"/>
    <property type="match status" value="1"/>
</dbReference>
<dbReference type="PANTHER" id="PTHR23235:SF3">
    <property type="entry name" value="TRANSCRIPTION FACTOR SP3"/>
    <property type="match status" value="1"/>
</dbReference>
<dbReference type="Pfam" id="PF00096">
    <property type="entry name" value="zf-C2H2"/>
    <property type="match status" value="3"/>
</dbReference>
<dbReference type="SMART" id="SM00355">
    <property type="entry name" value="ZnF_C2H2"/>
    <property type="match status" value="3"/>
</dbReference>
<dbReference type="SUPFAM" id="SSF57667">
    <property type="entry name" value="beta-beta-alpha zinc fingers"/>
    <property type="match status" value="2"/>
</dbReference>
<dbReference type="PROSITE" id="PS00028">
    <property type="entry name" value="ZINC_FINGER_C2H2_1"/>
    <property type="match status" value="3"/>
</dbReference>
<dbReference type="PROSITE" id="PS50157">
    <property type="entry name" value="ZINC_FINGER_C2H2_2"/>
    <property type="match status" value="3"/>
</dbReference>
<keyword id="KW-0007">Acetylation</keyword>
<keyword id="KW-0010">Activator</keyword>
<keyword id="KW-0025">Alternative splicing</keyword>
<keyword id="KW-0238">DNA-binding</keyword>
<keyword id="KW-1017">Isopeptide bond</keyword>
<keyword id="KW-0479">Metal-binding</keyword>
<keyword id="KW-0539">Nucleus</keyword>
<keyword id="KW-0597">Phosphoprotein</keyword>
<keyword id="KW-1185">Reference proteome</keyword>
<keyword id="KW-0677">Repeat</keyword>
<keyword id="KW-0804">Transcription</keyword>
<keyword id="KW-0805">Transcription regulation</keyword>
<keyword id="KW-0832">Ubl conjugation</keyword>
<keyword id="KW-0862">Zinc</keyword>
<keyword id="KW-0863">Zinc-finger</keyword>